<protein>
    <recommendedName>
        <fullName evidence="1">tRNA1(Val) (adenine(37)-N6)-methyltransferase</fullName>
        <ecNumber evidence="1">2.1.1.223</ecNumber>
    </recommendedName>
    <alternativeName>
        <fullName evidence="1">tRNA m6A37 methyltransferase</fullName>
    </alternativeName>
</protein>
<organism>
    <name type="scientific">Yersinia pestis bv. Antiqua (strain Angola)</name>
    <dbReference type="NCBI Taxonomy" id="349746"/>
    <lineage>
        <taxon>Bacteria</taxon>
        <taxon>Pseudomonadati</taxon>
        <taxon>Pseudomonadota</taxon>
        <taxon>Gammaproteobacteria</taxon>
        <taxon>Enterobacterales</taxon>
        <taxon>Yersiniaceae</taxon>
        <taxon>Yersinia</taxon>
    </lineage>
</organism>
<reference key="1">
    <citation type="journal article" date="2010" name="J. Bacteriol.">
        <title>Genome sequence of the deep-rooted Yersinia pestis strain Angola reveals new insights into the evolution and pangenome of the plague bacterium.</title>
        <authorList>
            <person name="Eppinger M."/>
            <person name="Worsham P.L."/>
            <person name="Nikolich M.P."/>
            <person name="Riley D.R."/>
            <person name="Sebastian Y."/>
            <person name="Mou S."/>
            <person name="Achtman M."/>
            <person name="Lindler L.E."/>
            <person name="Ravel J."/>
        </authorList>
    </citation>
    <scope>NUCLEOTIDE SEQUENCE [LARGE SCALE GENOMIC DNA]</scope>
    <source>
        <strain>Angola</strain>
    </source>
</reference>
<name>TRMN6_YERPG</name>
<dbReference type="EC" id="2.1.1.223" evidence="1"/>
<dbReference type="EMBL" id="CP000901">
    <property type="protein sequence ID" value="ABX86820.1"/>
    <property type="molecule type" value="Genomic_DNA"/>
</dbReference>
<dbReference type="SMR" id="A9R3Z3"/>
<dbReference type="KEGG" id="ypg:YpAngola_A3602"/>
<dbReference type="GO" id="GO:0005737">
    <property type="term" value="C:cytoplasm"/>
    <property type="evidence" value="ECO:0007669"/>
    <property type="project" value="UniProtKB-SubCell"/>
</dbReference>
<dbReference type="GO" id="GO:0003676">
    <property type="term" value="F:nucleic acid binding"/>
    <property type="evidence" value="ECO:0007669"/>
    <property type="project" value="InterPro"/>
</dbReference>
<dbReference type="GO" id="GO:0016430">
    <property type="term" value="F:tRNA (adenine-N6)-methyltransferase activity"/>
    <property type="evidence" value="ECO:0007669"/>
    <property type="project" value="UniProtKB-UniRule"/>
</dbReference>
<dbReference type="GO" id="GO:0032259">
    <property type="term" value="P:methylation"/>
    <property type="evidence" value="ECO:0007669"/>
    <property type="project" value="UniProtKB-KW"/>
</dbReference>
<dbReference type="GO" id="GO:0008033">
    <property type="term" value="P:tRNA processing"/>
    <property type="evidence" value="ECO:0007669"/>
    <property type="project" value="UniProtKB-UniRule"/>
</dbReference>
<dbReference type="CDD" id="cd02440">
    <property type="entry name" value="AdoMet_MTases"/>
    <property type="match status" value="1"/>
</dbReference>
<dbReference type="Gene3D" id="3.40.50.150">
    <property type="entry name" value="Vaccinia Virus protein VP39"/>
    <property type="match status" value="1"/>
</dbReference>
<dbReference type="HAMAP" id="MF_01872">
    <property type="entry name" value="tRNA_methyltr_YfiC"/>
    <property type="match status" value="1"/>
</dbReference>
<dbReference type="InterPro" id="IPR002052">
    <property type="entry name" value="DNA_methylase_N6_adenine_CS"/>
</dbReference>
<dbReference type="InterPro" id="IPR029063">
    <property type="entry name" value="SAM-dependent_MTases_sf"/>
</dbReference>
<dbReference type="InterPro" id="IPR007848">
    <property type="entry name" value="Small_mtfrase_dom"/>
</dbReference>
<dbReference type="InterPro" id="IPR050210">
    <property type="entry name" value="tRNA_Adenine-N(6)_MTase"/>
</dbReference>
<dbReference type="InterPro" id="IPR022882">
    <property type="entry name" value="tRNA_adenine-N6_MeTrfase"/>
</dbReference>
<dbReference type="NCBIfam" id="NF047853">
    <property type="entry name" value="tRm6a37MtseTrmN"/>
    <property type="match status" value="1"/>
</dbReference>
<dbReference type="PANTHER" id="PTHR47739">
    <property type="entry name" value="TRNA1(VAL) (ADENINE(37)-N6)-METHYLTRANSFERASE"/>
    <property type="match status" value="1"/>
</dbReference>
<dbReference type="PANTHER" id="PTHR47739:SF1">
    <property type="entry name" value="TRNA1(VAL) (ADENINE(37)-N6)-METHYLTRANSFERASE"/>
    <property type="match status" value="1"/>
</dbReference>
<dbReference type="Pfam" id="PF05175">
    <property type="entry name" value="MTS"/>
    <property type="match status" value="1"/>
</dbReference>
<dbReference type="PRINTS" id="PR00507">
    <property type="entry name" value="N12N6MTFRASE"/>
</dbReference>
<dbReference type="SUPFAM" id="SSF53335">
    <property type="entry name" value="S-adenosyl-L-methionine-dependent methyltransferases"/>
    <property type="match status" value="1"/>
</dbReference>
<dbReference type="PROSITE" id="PS00092">
    <property type="entry name" value="N6_MTASE"/>
    <property type="match status" value="1"/>
</dbReference>
<sequence>MGEQLKKQPVLRGGGFTFKQFFVAHDRCAMKVGTDGVLLGAWVPVLHARRVLDIGCGSGLIALMIAQRSLPQVQIDGVELEPAAAQQASSNVELSPWAERIHIHQQDIHQFAENHPHQYDLIVSNPPYFAPAIACRDEARDTARYTGSLTHDALLNCAEKLITEDGMFCVVLPHELGIEFARLAGQQGWFVRCQVDIRDRPGKPLHRMLLTLSRQAGETVYQHLALRQSEGVYSPEFCQLISDFYLNY</sequence>
<accession>A9R3Z3</accession>
<proteinExistence type="inferred from homology"/>
<evidence type="ECO:0000255" key="1">
    <source>
        <dbReference type="HAMAP-Rule" id="MF_01872"/>
    </source>
</evidence>
<feature type="chain" id="PRO_0000387453" description="tRNA1(Val) (adenine(37)-N6)-methyltransferase">
    <location>
        <begin position="1"/>
        <end position="248"/>
    </location>
</feature>
<keyword id="KW-0963">Cytoplasm</keyword>
<keyword id="KW-0489">Methyltransferase</keyword>
<keyword id="KW-0949">S-adenosyl-L-methionine</keyword>
<keyword id="KW-0808">Transferase</keyword>
<keyword id="KW-0819">tRNA processing</keyword>
<gene>
    <name type="ordered locus">YpAngola_A3602</name>
</gene>
<comment type="function">
    <text evidence="1">Specifically methylates the adenine in position 37 of tRNA(1)(Val) (anticodon cmo5UAC).</text>
</comment>
<comment type="catalytic activity">
    <reaction evidence="1">
        <text>adenosine(37) in tRNA1(Val) + S-adenosyl-L-methionine = N(6)-methyladenosine(37) in tRNA1(Val) + S-adenosyl-L-homocysteine + H(+)</text>
        <dbReference type="Rhea" id="RHEA:43160"/>
        <dbReference type="Rhea" id="RHEA-COMP:10369"/>
        <dbReference type="Rhea" id="RHEA-COMP:10370"/>
        <dbReference type="ChEBI" id="CHEBI:15378"/>
        <dbReference type="ChEBI" id="CHEBI:57856"/>
        <dbReference type="ChEBI" id="CHEBI:59789"/>
        <dbReference type="ChEBI" id="CHEBI:74411"/>
        <dbReference type="ChEBI" id="CHEBI:74449"/>
        <dbReference type="EC" id="2.1.1.223"/>
    </reaction>
</comment>
<comment type="subcellular location">
    <subcellularLocation>
        <location evidence="1">Cytoplasm</location>
    </subcellularLocation>
</comment>
<comment type="similarity">
    <text evidence="1">Belongs to the methyltransferase superfamily. tRNA (adenine-N(6)-)-methyltransferase family.</text>
</comment>